<keyword id="KW-1003">Cell membrane</keyword>
<keyword id="KW-0963">Cytoplasm</keyword>
<keyword id="KW-0342">GTP-binding</keyword>
<keyword id="KW-0472">Membrane</keyword>
<keyword id="KW-0547">Nucleotide-binding</keyword>
<keyword id="KW-1185">Reference proteome</keyword>
<keyword id="KW-0690">Ribosome biogenesis</keyword>
<keyword id="KW-0694">RNA-binding</keyword>
<keyword id="KW-0699">rRNA-binding</keyword>
<accession>Q182C3</accession>
<feature type="chain" id="PRO_1000133773" description="GTPase Era">
    <location>
        <begin position="1"/>
        <end position="297"/>
    </location>
</feature>
<feature type="domain" description="Era-type G" evidence="2">
    <location>
        <begin position="3"/>
        <end position="171"/>
    </location>
</feature>
<feature type="domain" description="KH type-2" evidence="1">
    <location>
        <begin position="194"/>
        <end position="280"/>
    </location>
</feature>
<feature type="region of interest" description="G1" evidence="2">
    <location>
        <begin position="11"/>
        <end position="18"/>
    </location>
</feature>
<feature type="region of interest" description="G2" evidence="2">
    <location>
        <begin position="37"/>
        <end position="41"/>
    </location>
</feature>
<feature type="region of interest" description="G3" evidence="2">
    <location>
        <begin position="58"/>
        <end position="61"/>
    </location>
</feature>
<feature type="region of interest" description="G4" evidence="2">
    <location>
        <begin position="120"/>
        <end position="123"/>
    </location>
</feature>
<feature type="region of interest" description="G5" evidence="2">
    <location>
        <begin position="150"/>
        <end position="152"/>
    </location>
</feature>
<feature type="binding site" evidence="1">
    <location>
        <begin position="11"/>
        <end position="18"/>
    </location>
    <ligand>
        <name>GTP</name>
        <dbReference type="ChEBI" id="CHEBI:37565"/>
    </ligand>
</feature>
<feature type="binding site" evidence="1">
    <location>
        <begin position="58"/>
        <end position="62"/>
    </location>
    <ligand>
        <name>GTP</name>
        <dbReference type="ChEBI" id="CHEBI:37565"/>
    </ligand>
</feature>
<feature type="binding site" evidence="1">
    <location>
        <begin position="120"/>
        <end position="123"/>
    </location>
    <ligand>
        <name>GTP</name>
        <dbReference type="ChEBI" id="CHEBI:37565"/>
    </ligand>
</feature>
<organism>
    <name type="scientific">Clostridioides difficile (strain 630)</name>
    <name type="common">Peptoclostridium difficile</name>
    <dbReference type="NCBI Taxonomy" id="272563"/>
    <lineage>
        <taxon>Bacteria</taxon>
        <taxon>Bacillati</taxon>
        <taxon>Bacillota</taxon>
        <taxon>Clostridia</taxon>
        <taxon>Peptostreptococcales</taxon>
        <taxon>Peptostreptococcaceae</taxon>
        <taxon>Clostridioides</taxon>
    </lineage>
</organism>
<sequence length="297" mass="33889">MFKSGFVSIVGRPNVGKSTLMNNVVGEKIAIMSDKPQTTRNTIQAVYTDEEMQIVFLDTPGIHKPKNKLGEFMVKAATEAFKNVDLILFVVDDSKKIGPGDRKIIEDLRSVKTPIILVVNKIDQLDQKDELFDIIKMYDREGIFKEIVPISALKGKNTDTLIKVIQNYLEEGPKYFPDYMITDQPERVLIAELIREKVLHYLNDEIPHGVAVEIEKMKARNDKEIVDVSAVIYCERDSHKGIIIGKNGRKLKGIGKSARQDIELLLGSQINLQLWVKVKENWRNLQNYINNFGYNDK</sequence>
<comment type="function">
    <text evidence="1">An essential GTPase that binds both GDP and GTP, with rapid nucleotide exchange. Plays a role in 16S rRNA processing and 30S ribosomal subunit biogenesis and possibly also in cell cycle regulation and energy metabolism.</text>
</comment>
<comment type="subunit">
    <text evidence="1">Monomer.</text>
</comment>
<comment type="subcellular location">
    <subcellularLocation>
        <location>Cytoplasm</location>
    </subcellularLocation>
    <subcellularLocation>
        <location evidence="1">Cell membrane</location>
        <topology evidence="1">Peripheral membrane protein</topology>
    </subcellularLocation>
</comment>
<comment type="similarity">
    <text evidence="1 2">Belongs to the TRAFAC class TrmE-Era-EngA-EngB-Septin-like GTPase superfamily. Era GTPase family.</text>
</comment>
<gene>
    <name evidence="1" type="primary">era</name>
    <name type="ordered locus">CD630_24370</name>
</gene>
<protein>
    <recommendedName>
        <fullName evidence="1">GTPase Era</fullName>
    </recommendedName>
</protein>
<reference key="1">
    <citation type="journal article" date="2006" name="Nat. Genet.">
        <title>The multidrug-resistant human pathogen Clostridium difficile has a highly mobile, mosaic genome.</title>
        <authorList>
            <person name="Sebaihia M."/>
            <person name="Wren B.W."/>
            <person name="Mullany P."/>
            <person name="Fairweather N.F."/>
            <person name="Minton N."/>
            <person name="Stabler R."/>
            <person name="Thomson N.R."/>
            <person name="Roberts A.P."/>
            <person name="Cerdeno-Tarraga A.M."/>
            <person name="Wang H."/>
            <person name="Holden M.T.G."/>
            <person name="Wright A."/>
            <person name="Churcher C."/>
            <person name="Quail M.A."/>
            <person name="Baker S."/>
            <person name="Bason N."/>
            <person name="Brooks K."/>
            <person name="Chillingworth T."/>
            <person name="Cronin A."/>
            <person name="Davis P."/>
            <person name="Dowd L."/>
            <person name="Fraser A."/>
            <person name="Feltwell T."/>
            <person name="Hance Z."/>
            <person name="Holroyd S."/>
            <person name="Jagels K."/>
            <person name="Moule S."/>
            <person name="Mungall K."/>
            <person name="Price C."/>
            <person name="Rabbinowitsch E."/>
            <person name="Sharp S."/>
            <person name="Simmonds M."/>
            <person name="Stevens K."/>
            <person name="Unwin L."/>
            <person name="Whithead S."/>
            <person name="Dupuy B."/>
            <person name="Dougan G."/>
            <person name="Barrell B."/>
            <person name="Parkhill J."/>
        </authorList>
    </citation>
    <scope>NUCLEOTIDE SEQUENCE [LARGE SCALE GENOMIC DNA]</scope>
    <source>
        <strain>630</strain>
    </source>
</reference>
<evidence type="ECO:0000255" key="1">
    <source>
        <dbReference type="HAMAP-Rule" id="MF_00367"/>
    </source>
</evidence>
<evidence type="ECO:0000255" key="2">
    <source>
        <dbReference type="PROSITE-ProRule" id="PRU01050"/>
    </source>
</evidence>
<name>ERA_CLOD6</name>
<dbReference type="EMBL" id="AM180355">
    <property type="protein sequence ID" value="CAJ69323.1"/>
    <property type="molecule type" value="Genomic_DNA"/>
</dbReference>
<dbReference type="RefSeq" id="WP_003416645.1">
    <property type="nucleotide sequence ID" value="NZ_JAUPES010000003.1"/>
</dbReference>
<dbReference type="RefSeq" id="YP_001088950.1">
    <property type="nucleotide sequence ID" value="NC_009089.1"/>
</dbReference>
<dbReference type="SMR" id="Q182C3"/>
<dbReference type="STRING" id="272563.CD630_24370"/>
<dbReference type="EnsemblBacteria" id="CAJ69323">
    <property type="protein sequence ID" value="CAJ69323"/>
    <property type="gene ID" value="CD630_24370"/>
</dbReference>
<dbReference type="GeneID" id="66354834"/>
<dbReference type="KEGG" id="cdf:CD630_24370"/>
<dbReference type="KEGG" id="pdc:CDIF630_02681"/>
<dbReference type="PATRIC" id="fig|272563.120.peg.2573"/>
<dbReference type="eggNOG" id="COG1159">
    <property type="taxonomic scope" value="Bacteria"/>
</dbReference>
<dbReference type="OrthoDB" id="9805918at2"/>
<dbReference type="PhylomeDB" id="Q182C3"/>
<dbReference type="BioCyc" id="PDIF272563:G12WB-2590-MONOMER"/>
<dbReference type="Proteomes" id="UP000001978">
    <property type="component" value="Chromosome"/>
</dbReference>
<dbReference type="GO" id="GO:0005829">
    <property type="term" value="C:cytosol"/>
    <property type="evidence" value="ECO:0007669"/>
    <property type="project" value="TreeGrafter"/>
</dbReference>
<dbReference type="GO" id="GO:0005886">
    <property type="term" value="C:plasma membrane"/>
    <property type="evidence" value="ECO:0007669"/>
    <property type="project" value="UniProtKB-SubCell"/>
</dbReference>
<dbReference type="GO" id="GO:0005525">
    <property type="term" value="F:GTP binding"/>
    <property type="evidence" value="ECO:0007669"/>
    <property type="project" value="UniProtKB-UniRule"/>
</dbReference>
<dbReference type="GO" id="GO:0003924">
    <property type="term" value="F:GTPase activity"/>
    <property type="evidence" value="ECO:0007669"/>
    <property type="project" value="UniProtKB-UniRule"/>
</dbReference>
<dbReference type="GO" id="GO:0043024">
    <property type="term" value="F:ribosomal small subunit binding"/>
    <property type="evidence" value="ECO:0007669"/>
    <property type="project" value="TreeGrafter"/>
</dbReference>
<dbReference type="GO" id="GO:0070181">
    <property type="term" value="F:small ribosomal subunit rRNA binding"/>
    <property type="evidence" value="ECO:0007669"/>
    <property type="project" value="UniProtKB-UniRule"/>
</dbReference>
<dbReference type="GO" id="GO:0000028">
    <property type="term" value="P:ribosomal small subunit assembly"/>
    <property type="evidence" value="ECO:0007669"/>
    <property type="project" value="TreeGrafter"/>
</dbReference>
<dbReference type="CDD" id="cd04163">
    <property type="entry name" value="Era"/>
    <property type="match status" value="1"/>
</dbReference>
<dbReference type="CDD" id="cd22534">
    <property type="entry name" value="KH-II_Era"/>
    <property type="match status" value="1"/>
</dbReference>
<dbReference type="FunFam" id="3.30.300.20:FF:000003">
    <property type="entry name" value="GTPase Era"/>
    <property type="match status" value="1"/>
</dbReference>
<dbReference type="FunFam" id="3.40.50.300:FF:000094">
    <property type="entry name" value="GTPase Era"/>
    <property type="match status" value="1"/>
</dbReference>
<dbReference type="Gene3D" id="3.30.300.20">
    <property type="match status" value="1"/>
</dbReference>
<dbReference type="Gene3D" id="3.40.50.300">
    <property type="entry name" value="P-loop containing nucleotide triphosphate hydrolases"/>
    <property type="match status" value="1"/>
</dbReference>
<dbReference type="HAMAP" id="MF_00367">
    <property type="entry name" value="GTPase_Era"/>
    <property type="match status" value="1"/>
</dbReference>
<dbReference type="InterPro" id="IPR030388">
    <property type="entry name" value="G_ERA_dom"/>
</dbReference>
<dbReference type="InterPro" id="IPR006073">
    <property type="entry name" value="GTP-bd"/>
</dbReference>
<dbReference type="InterPro" id="IPR005662">
    <property type="entry name" value="GTPase_Era-like"/>
</dbReference>
<dbReference type="InterPro" id="IPR015946">
    <property type="entry name" value="KH_dom-like_a/b"/>
</dbReference>
<dbReference type="InterPro" id="IPR004044">
    <property type="entry name" value="KH_dom_type_2"/>
</dbReference>
<dbReference type="InterPro" id="IPR009019">
    <property type="entry name" value="KH_sf_prok-type"/>
</dbReference>
<dbReference type="InterPro" id="IPR027417">
    <property type="entry name" value="P-loop_NTPase"/>
</dbReference>
<dbReference type="InterPro" id="IPR005225">
    <property type="entry name" value="Small_GTP-bd"/>
</dbReference>
<dbReference type="NCBIfam" id="TIGR00436">
    <property type="entry name" value="era"/>
    <property type="match status" value="1"/>
</dbReference>
<dbReference type="NCBIfam" id="NF000908">
    <property type="entry name" value="PRK00089.1"/>
    <property type="match status" value="1"/>
</dbReference>
<dbReference type="NCBIfam" id="TIGR00231">
    <property type="entry name" value="small_GTP"/>
    <property type="match status" value="1"/>
</dbReference>
<dbReference type="PANTHER" id="PTHR42698">
    <property type="entry name" value="GTPASE ERA"/>
    <property type="match status" value="1"/>
</dbReference>
<dbReference type="PANTHER" id="PTHR42698:SF1">
    <property type="entry name" value="GTPASE ERA, MITOCHONDRIAL"/>
    <property type="match status" value="1"/>
</dbReference>
<dbReference type="Pfam" id="PF07650">
    <property type="entry name" value="KH_2"/>
    <property type="match status" value="1"/>
</dbReference>
<dbReference type="Pfam" id="PF01926">
    <property type="entry name" value="MMR_HSR1"/>
    <property type="match status" value="1"/>
</dbReference>
<dbReference type="PRINTS" id="PR00326">
    <property type="entry name" value="GTP1OBG"/>
</dbReference>
<dbReference type="SUPFAM" id="SSF52540">
    <property type="entry name" value="P-loop containing nucleoside triphosphate hydrolases"/>
    <property type="match status" value="1"/>
</dbReference>
<dbReference type="SUPFAM" id="SSF54814">
    <property type="entry name" value="Prokaryotic type KH domain (KH-domain type II)"/>
    <property type="match status" value="1"/>
</dbReference>
<dbReference type="PROSITE" id="PS51713">
    <property type="entry name" value="G_ERA"/>
    <property type="match status" value="1"/>
</dbReference>
<dbReference type="PROSITE" id="PS50823">
    <property type="entry name" value="KH_TYPE_2"/>
    <property type="match status" value="1"/>
</dbReference>
<proteinExistence type="inferred from homology"/>